<organism>
    <name type="scientific">Kluyveromyces lactis (strain ATCC 8585 / CBS 2359 / DSM 70799 / NBRC 1267 / NRRL Y-1140 / WM37)</name>
    <name type="common">Yeast</name>
    <name type="synonym">Candida sphaerica</name>
    <dbReference type="NCBI Taxonomy" id="284590"/>
    <lineage>
        <taxon>Eukaryota</taxon>
        <taxon>Fungi</taxon>
        <taxon>Dikarya</taxon>
        <taxon>Ascomycota</taxon>
        <taxon>Saccharomycotina</taxon>
        <taxon>Saccharomycetes</taxon>
        <taxon>Saccharomycetales</taxon>
        <taxon>Saccharomycetaceae</taxon>
        <taxon>Kluyveromyces</taxon>
    </lineage>
</organism>
<evidence type="ECO:0000250" key="1"/>
<evidence type="ECO:0000256" key="2">
    <source>
        <dbReference type="SAM" id="MobiDB-lite"/>
    </source>
</evidence>
<evidence type="ECO:0000305" key="3"/>
<dbReference type="EMBL" id="CR382125">
    <property type="protein sequence ID" value="CAG99343.1"/>
    <property type="molecule type" value="Genomic_DNA"/>
</dbReference>
<dbReference type="RefSeq" id="XP_454256.1">
    <property type="nucleotide sequence ID" value="XM_454256.1"/>
</dbReference>
<dbReference type="SMR" id="Q6CP83"/>
<dbReference type="FunCoup" id="Q6CP83">
    <property type="interactions" value="94"/>
</dbReference>
<dbReference type="STRING" id="284590.Q6CP83"/>
<dbReference type="PaxDb" id="284590-Q6CP83"/>
<dbReference type="KEGG" id="kla:KLLA0_E06821g"/>
<dbReference type="eggNOG" id="ENOG502QXG3">
    <property type="taxonomic scope" value="Eukaryota"/>
</dbReference>
<dbReference type="HOGENOM" id="CLU_117719_0_0_1"/>
<dbReference type="InParanoid" id="Q6CP83"/>
<dbReference type="OMA" id="SYPTEFQ"/>
<dbReference type="Proteomes" id="UP000000598">
    <property type="component" value="Chromosome E"/>
</dbReference>
<dbReference type="GO" id="GO:0070847">
    <property type="term" value="C:core mediator complex"/>
    <property type="evidence" value="ECO:0007669"/>
    <property type="project" value="TreeGrafter"/>
</dbReference>
<dbReference type="GO" id="GO:0016592">
    <property type="term" value="C:mediator complex"/>
    <property type="evidence" value="ECO:0007669"/>
    <property type="project" value="InterPro"/>
</dbReference>
<dbReference type="GO" id="GO:0003712">
    <property type="term" value="F:transcription coregulator activity"/>
    <property type="evidence" value="ECO:0007669"/>
    <property type="project" value="InterPro"/>
</dbReference>
<dbReference type="GO" id="GO:0006357">
    <property type="term" value="P:regulation of transcription by RNA polymerase II"/>
    <property type="evidence" value="ECO:0007669"/>
    <property type="project" value="InterPro"/>
</dbReference>
<dbReference type="InterPro" id="IPR013942">
    <property type="entry name" value="Mediator_Med19_fun"/>
</dbReference>
<dbReference type="PANTHER" id="PTHR28270">
    <property type="entry name" value="MEDIATOR OF RNA POLYMERASE II TRANSCRIPTION SUBUNIT 19"/>
    <property type="match status" value="1"/>
</dbReference>
<dbReference type="PANTHER" id="PTHR28270:SF1">
    <property type="entry name" value="MEDIATOR OF RNA POLYMERASE II TRANSCRIPTION SUBUNIT 19"/>
    <property type="match status" value="1"/>
</dbReference>
<dbReference type="Pfam" id="PF08633">
    <property type="entry name" value="Rox3"/>
    <property type="match status" value="1"/>
</dbReference>
<reference key="1">
    <citation type="journal article" date="2004" name="Nature">
        <title>Genome evolution in yeasts.</title>
        <authorList>
            <person name="Dujon B."/>
            <person name="Sherman D."/>
            <person name="Fischer G."/>
            <person name="Durrens P."/>
            <person name="Casaregola S."/>
            <person name="Lafontaine I."/>
            <person name="de Montigny J."/>
            <person name="Marck C."/>
            <person name="Neuveglise C."/>
            <person name="Talla E."/>
            <person name="Goffard N."/>
            <person name="Frangeul L."/>
            <person name="Aigle M."/>
            <person name="Anthouard V."/>
            <person name="Babour A."/>
            <person name="Barbe V."/>
            <person name="Barnay S."/>
            <person name="Blanchin S."/>
            <person name="Beckerich J.-M."/>
            <person name="Beyne E."/>
            <person name="Bleykasten C."/>
            <person name="Boisrame A."/>
            <person name="Boyer J."/>
            <person name="Cattolico L."/>
            <person name="Confanioleri F."/>
            <person name="de Daruvar A."/>
            <person name="Despons L."/>
            <person name="Fabre E."/>
            <person name="Fairhead C."/>
            <person name="Ferry-Dumazet H."/>
            <person name="Groppi A."/>
            <person name="Hantraye F."/>
            <person name="Hennequin C."/>
            <person name="Jauniaux N."/>
            <person name="Joyet P."/>
            <person name="Kachouri R."/>
            <person name="Kerrest A."/>
            <person name="Koszul R."/>
            <person name="Lemaire M."/>
            <person name="Lesur I."/>
            <person name="Ma L."/>
            <person name="Muller H."/>
            <person name="Nicaud J.-M."/>
            <person name="Nikolski M."/>
            <person name="Oztas S."/>
            <person name="Ozier-Kalogeropoulos O."/>
            <person name="Pellenz S."/>
            <person name="Potier S."/>
            <person name="Richard G.-F."/>
            <person name="Straub M.-L."/>
            <person name="Suleau A."/>
            <person name="Swennen D."/>
            <person name="Tekaia F."/>
            <person name="Wesolowski-Louvel M."/>
            <person name="Westhof E."/>
            <person name="Wirth B."/>
            <person name="Zeniou-Meyer M."/>
            <person name="Zivanovic Y."/>
            <person name="Bolotin-Fukuhara M."/>
            <person name="Thierry A."/>
            <person name="Bouchier C."/>
            <person name="Caudron B."/>
            <person name="Scarpelli C."/>
            <person name="Gaillardin C."/>
            <person name="Weissenbach J."/>
            <person name="Wincker P."/>
            <person name="Souciet J.-L."/>
        </authorList>
    </citation>
    <scope>NUCLEOTIDE SEQUENCE [LARGE SCALE GENOMIC DNA]</scope>
    <source>
        <strain>ATCC 8585 / CBS 2359 / DSM 70799 / NBRC 1267 / NRRL Y-1140 / WM37</strain>
    </source>
</reference>
<keyword id="KW-0010">Activator</keyword>
<keyword id="KW-0539">Nucleus</keyword>
<keyword id="KW-1185">Reference proteome</keyword>
<keyword id="KW-0804">Transcription</keyword>
<keyword id="KW-0805">Transcription regulation</keyword>
<proteinExistence type="inferred from homology"/>
<feature type="chain" id="PRO_0000304778" description="Mediator of RNA polymerase II transcription subunit 19">
    <location>
        <begin position="1"/>
        <end position="206"/>
    </location>
</feature>
<feature type="region of interest" description="Disordered" evidence="2">
    <location>
        <begin position="171"/>
        <end position="206"/>
    </location>
</feature>
<feature type="compositionally biased region" description="Polar residues" evidence="2">
    <location>
        <begin position="183"/>
        <end position="195"/>
    </location>
</feature>
<protein>
    <recommendedName>
        <fullName>Mediator of RNA polymerase II transcription subunit 19</fullName>
    </recommendedName>
    <alternativeName>
        <fullName>Mediator complex subunit 19</fullName>
    </alternativeName>
</protein>
<accession>Q6CP83</accession>
<gene>
    <name type="primary">ROX3</name>
    <name type="synonym">MED19</name>
    <name type="ordered locus">KLLA0E06809g</name>
</gene>
<sequence>MATSHEDGSATHPNYYYYVDPSLPVYESQQPNPVDDLITIYGLEEVARQVARTNADGTKAVKLRKSYKNQIQDLSGRFITIPSRENGKGGEISDVIFQNNPDMMNQAKLVEGMSEEEYRDAMMKRDTGLFEPPQMDWDMCSTVIGQLMKSHPSEFKNSGFDVDDLAFDLNGTGTKTKKRKYKSNGSSMASPNTELQPDDMKRRRLE</sequence>
<name>MED19_KLULA</name>
<comment type="function">
    <text evidence="1">Component of the Mediator complex, a coactivator involved in the regulated transcription of nearly all RNA polymerase II-dependent genes. Mediator functions as a bridge to convey information from gene-specific regulatory proteins to the basal RNA polymerase II transcription machinery. Mediator is recruited to promoters by direct interactions with regulatory proteins and serves as a scaffold for the assembly of a functional preinitiation complex with RNA polymerase II and the general transcription factors (By similarity).</text>
</comment>
<comment type="subunit">
    <text evidence="1">Component of the Mediator complex.</text>
</comment>
<comment type="subcellular location">
    <subcellularLocation>
        <location evidence="1">Nucleus</location>
    </subcellularLocation>
</comment>
<comment type="similarity">
    <text evidence="3">Belongs to the Mediator complex subunit 19 family.</text>
</comment>